<dbReference type="EC" id="3.5.1.88" evidence="1"/>
<dbReference type="EMBL" id="CP001078">
    <property type="protein sequence ID" value="ACD52880.1"/>
    <property type="molecule type" value="Genomic_DNA"/>
</dbReference>
<dbReference type="RefSeq" id="WP_003371433.1">
    <property type="nucleotide sequence ID" value="NC_010723.1"/>
</dbReference>
<dbReference type="SMR" id="B2V4B1"/>
<dbReference type="KEGG" id="cbt:CLH_1166"/>
<dbReference type="HOGENOM" id="CLU_061901_4_2_9"/>
<dbReference type="GO" id="GO:0046872">
    <property type="term" value="F:metal ion binding"/>
    <property type="evidence" value="ECO:0007669"/>
    <property type="project" value="UniProtKB-KW"/>
</dbReference>
<dbReference type="GO" id="GO:0042586">
    <property type="term" value="F:peptide deformylase activity"/>
    <property type="evidence" value="ECO:0007669"/>
    <property type="project" value="UniProtKB-UniRule"/>
</dbReference>
<dbReference type="GO" id="GO:0043686">
    <property type="term" value="P:co-translational protein modification"/>
    <property type="evidence" value="ECO:0007669"/>
    <property type="project" value="TreeGrafter"/>
</dbReference>
<dbReference type="GO" id="GO:0006412">
    <property type="term" value="P:translation"/>
    <property type="evidence" value="ECO:0007669"/>
    <property type="project" value="UniProtKB-UniRule"/>
</dbReference>
<dbReference type="CDD" id="cd00487">
    <property type="entry name" value="Pep_deformylase"/>
    <property type="match status" value="1"/>
</dbReference>
<dbReference type="FunFam" id="3.90.45.10:FF:000005">
    <property type="entry name" value="Peptide deformylase"/>
    <property type="match status" value="1"/>
</dbReference>
<dbReference type="Gene3D" id="3.90.45.10">
    <property type="entry name" value="Peptide deformylase"/>
    <property type="match status" value="1"/>
</dbReference>
<dbReference type="HAMAP" id="MF_00163">
    <property type="entry name" value="Pep_deformylase"/>
    <property type="match status" value="1"/>
</dbReference>
<dbReference type="InterPro" id="IPR023635">
    <property type="entry name" value="Peptide_deformylase"/>
</dbReference>
<dbReference type="InterPro" id="IPR036821">
    <property type="entry name" value="Peptide_deformylase_sf"/>
</dbReference>
<dbReference type="NCBIfam" id="TIGR00079">
    <property type="entry name" value="pept_deformyl"/>
    <property type="match status" value="1"/>
</dbReference>
<dbReference type="NCBIfam" id="NF001159">
    <property type="entry name" value="PRK00150.1-3"/>
    <property type="match status" value="1"/>
</dbReference>
<dbReference type="PANTHER" id="PTHR10458">
    <property type="entry name" value="PEPTIDE DEFORMYLASE"/>
    <property type="match status" value="1"/>
</dbReference>
<dbReference type="PANTHER" id="PTHR10458:SF22">
    <property type="entry name" value="PEPTIDE DEFORMYLASE"/>
    <property type="match status" value="1"/>
</dbReference>
<dbReference type="Pfam" id="PF01327">
    <property type="entry name" value="Pep_deformylase"/>
    <property type="match status" value="1"/>
</dbReference>
<dbReference type="PIRSF" id="PIRSF004749">
    <property type="entry name" value="Pep_def"/>
    <property type="match status" value="1"/>
</dbReference>
<dbReference type="PRINTS" id="PR01576">
    <property type="entry name" value="PDEFORMYLASE"/>
</dbReference>
<dbReference type="SUPFAM" id="SSF56420">
    <property type="entry name" value="Peptide deformylase"/>
    <property type="match status" value="1"/>
</dbReference>
<gene>
    <name evidence="1" type="primary">def</name>
    <name type="ordered locus">CLH_1166</name>
</gene>
<comment type="function">
    <text evidence="1">Removes the formyl group from the N-terminal Met of newly synthesized proteins. Requires at least a dipeptide for an efficient rate of reaction. N-terminal L-methionine is a prerequisite for activity but the enzyme has broad specificity at other positions.</text>
</comment>
<comment type="catalytic activity">
    <reaction evidence="1">
        <text>N-terminal N-formyl-L-methionyl-[peptide] + H2O = N-terminal L-methionyl-[peptide] + formate</text>
        <dbReference type="Rhea" id="RHEA:24420"/>
        <dbReference type="Rhea" id="RHEA-COMP:10639"/>
        <dbReference type="Rhea" id="RHEA-COMP:10640"/>
        <dbReference type="ChEBI" id="CHEBI:15377"/>
        <dbReference type="ChEBI" id="CHEBI:15740"/>
        <dbReference type="ChEBI" id="CHEBI:49298"/>
        <dbReference type="ChEBI" id="CHEBI:64731"/>
        <dbReference type="EC" id="3.5.1.88"/>
    </reaction>
</comment>
<comment type="cofactor">
    <cofactor evidence="1">
        <name>Fe(2+)</name>
        <dbReference type="ChEBI" id="CHEBI:29033"/>
    </cofactor>
    <text evidence="1">Binds 1 Fe(2+) ion.</text>
</comment>
<comment type="similarity">
    <text evidence="1">Belongs to the polypeptide deformylase family.</text>
</comment>
<organism>
    <name type="scientific">Clostridium botulinum (strain Alaska E43 / Type E3)</name>
    <dbReference type="NCBI Taxonomy" id="508767"/>
    <lineage>
        <taxon>Bacteria</taxon>
        <taxon>Bacillati</taxon>
        <taxon>Bacillota</taxon>
        <taxon>Clostridia</taxon>
        <taxon>Eubacteriales</taxon>
        <taxon>Clostridiaceae</taxon>
        <taxon>Clostridium</taxon>
    </lineage>
</organism>
<proteinExistence type="inferred from homology"/>
<name>DEF_CLOBA</name>
<evidence type="ECO:0000255" key="1">
    <source>
        <dbReference type="HAMAP-Rule" id="MF_00163"/>
    </source>
</evidence>
<feature type="chain" id="PRO_1000097302" description="Peptide deformylase">
    <location>
        <begin position="1"/>
        <end position="147"/>
    </location>
</feature>
<feature type="active site" evidence="1">
    <location>
        <position position="131"/>
    </location>
</feature>
<feature type="binding site" evidence="1">
    <location>
        <position position="88"/>
    </location>
    <ligand>
        <name>Fe cation</name>
        <dbReference type="ChEBI" id="CHEBI:24875"/>
    </ligand>
</feature>
<feature type="binding site" evidence="1">
    <location>
        <position position="130"/>
    </location>
    <ligand>
        <name>Fe cation</name>
        <dbReference type="ChEBI" id="CHEBI:24875"/>
    </ligand>
</feature>
<feature type="binding site" evidence="1">
    <location>
        <position position="134"/>
    </location>
    <ligand>
        <name>Fe cation</name>
        <dbReference type="ChEBI" id="CHEBI:24875"/>
    </ligand>
</feature>
<protein>
    <recommendedName>
        <fullName evidence="1">Peptide deformylase</fullName>
        <shortName evidence="1">PDF</shortName>
        <ecNumber evidence="1">3.5.1.88</ecNumber>
    </recommendedName>
    <alternativeName>
        <fullName evidence="1">Polypeptide deformylase</fullName>
    </alternativeName>
</protein>
<sequence>MALRNIRKYGDSVLRKKCREVEKIDERLVTLIKDMLETMYDADGVGLAAPQVGILKRLFIVDIGDGPLVFINPEILDTDGKQVDEEGCLSLPGKTEPVMRPNYVKARALNEKGEEFEIEAEELLARAILHEYDHLNGTLFIDRTTKK</sequence>
<accession>B2V4B1</accession>
<keyword id="KW-0378">Hydrolase</keyword>
<keyword id="KW-0408">Iron</keyword>
<keyword id="KW-0479">Metal-binding</keyword>
<keyword id="KW-0648">Protein biosynthesis</keyword>
<reference key="1">
    <citation type="submission" date="2008-05" db="EMBL/GenBank/DDBJ databases">
        <title>Complete genome sequence of Clostridium botulinum E3 str. Alaska E43.</title>
        <authorList>
            <person name="Brinkac L.M."/>
            <person name="Brown J.L."/>
            <person name="Bruce D."/>
            <person name="Detter C."/>
            <person name="Munk C."/>
            <person name="Smith L.A."/>
            <person name="Smith T.J."/>
            <person name="Sutton G."/>
            <person name="Brettin T.S."/>
        </authorList>
    </citation>
    <scope>NUCLEOTIDE SEQUENCE [LARGE SCALE GENOMIC DNA]</scope>
    <source>
        <strain>Alaska E43 / Type E3</strain>
    </source>
</reference>